<sequence length="278" mass="31813">MSLALNPVAFNLGPIQVKWYGILMATGVLVATLMAINEGKKRQIMPDDFIDFLLWAVPIGFIGARIYYVVFEWGYFSQHPDQIIAIWNGGIAIYGGLIAGLIVLLVFCHQRMLPPFLMLDIIAPGVMAAQVIARWGNFMNQEAHGAKTTLSFLESLHLPHFIIQQMYIDGSYYQPTYLYESALNLVGLILILSLRHRKHLFKRGEVFFSYVIWYAAVRFFVEGMRTDSLYIANTIRVSQALSLILFFGAIILWVYRRKVIKPKWYLAGSGLKYPYNRD</sequence>
<organism>
    <name type="scientific">Lactobacillus gasseri (strain ATCC 33323 / DSM 20243 / BCRC 14619 / CIP 102991 / JCM 1131 / KCTC 3163 / NCIMB 11718 / NCTC 13722 / AM63)</name>
    <dbReference type="NCBI Taxonomy" id="324831"/>
    <lineage>
        <taxon>Bacteria</taxon>
        <taxon>Bacillati</taxon>
        <taxon>Bacillota</taxon>
        <taxon>Bacilli</taxon>
        <taxon>Lactobacillales</taxon>
        <taxon>Lactobacillaceae</taxon>
        <taxon>Lactobacillus</taxon>
    </lineage>
</organism>
<accession>Q042D3</accession>
<feature type="chain" id="PRO_1000053446" description="Phosphatidylglycerol--prolipoprotein diacylglyceryl transferase">
    <location>
        <begin position="1"/>
        <end position="278"/>
    </location>
</feature>
<feature type="transmembrane region" description="Helical" evidence="1">
    <location>
        <begin position="19"/>
        <end position="39"/>
    </location>
</feature>
<feature type="transmembrane region" description="Helical" evidence="1">
    <location>
        <begin position="49"/>
        <end position="69"/>
    </location>
</feature>
<feature type="transmembrane region" description="Helical" evidence="1">
    <location>
        <begin position="83"/>
        <end position="103"/>
    </location>
</feature>
<feature type="transmembrane region" description="Helical" evidence="1">
    <location>
        <begin position="112"/>
        <end position="132"/>
    </location>
</feature>
<feature type="transmembrane region" description="Helical" evidence="1">
    <location>
        <begin position="174"/>
        <end position="194"/>
    </location>
</feature>
<feature type="transmembrane region" description="Helical" evidence="1">
    <location>
        <begin position="204"/>
        <end position="224"/>
    </location>
</feature>
<feature type="transmembrane region" description="Helical" evidence="1">
    <location>
        <begin position="235"/>
        <end position="255"/>
    </location>
</feature>
<feature type="binding site" evidence="1">
    <location>
        <position position="134"/>
    </location>
    <ligand>
        <name>a 1,2-diacyl-sn-glycero-3-phospho-(1'-sn-glycerol)</name>
        <dbReference type="ChEBI" id="CHEBI:64716"/>
    </ligand>
</feature>
<protein>
    <recommendedName>
        <fullName evidence="1">Phosphatidylglycerol--prolipoprotein diacylglyceryl transferase</fullName>
        <ecNumber evidence="1">2.5.1.145</ecNumber>
    </recommendedName>
</protein>
<proteinExistence type="inferred from homology"/>
<reference key="1">
    <citation type="journal article" date="2006" name="Proc. Natl. Acad. Sci. U.S.A.">
        <title>Comparative genomics of the lactic acid bacteria.</title>
        <authorList>
            <person name="Makarova K.S."/>
            <person name="Slesarev A."/>
            <person name="Wolf Y.I."/>
            <person name="Sorokin A."/>
            <person name="Mirkin B."/>
            <person name="Koonin E.V."/>
            <person name="Pavlov A."/>
            <person name="Pavlova N."/>
            <person name="Karamychev V."/>
            <person name="Polouchine N."/>
            <person name="Shakhova V."/>
            <person name="Grigoriev I."/>
            <person name="Lou Y."/>
            <person name="Rohksar D."/>
            <person name="Lucas S."/>
            <person name="Huang K."/>
            <person name="Goodstein D.M."/>
            <person name="Hawkins T."/>
            <person name="Plengvidhya V."/>
            <person name="Welker D."/>
            <person name="Hughes J."/>
            <person name="Goh Y."/>
            <person name="Benson A."/>
            <person name="Baldwin K."/>
            <person name="Lee J.-H."/>
            <person name="Diaz-Muniz I."/>
            <person name="Dosti B."/>
            <person name="Smeianov V."/>
            <person name="Wechter W."/>
            <person name="Barabote R."/>
            <person name="Lorca G."/>
            <person name="Altermann E."/>
            <person name="Barrangou R."/>
            <person name="Ganesan B."/>
            <person name="Xie Y."/>
            <person name="Rawsthorne H."/>
            <person name="Tamir D."/>
            <person name="Parker C."/>
            <person name="Breidt F."/>
            <person name="Broadbent J.R."/>
            <person name="Hutkins R."/>
            <person name="O'Sullivan D."/>
            <person name="Steele J."/>
            <person name="Unlu G."/>
            <person name="Saier M.H. Jr."/>
            <person name="Klaenhammer T."/>
            <person name="Richardson P."/>
            <person name="Kozyavkin S."/>
            <person name="Weimer B.C."/>
            <person name="Mills D.A."/>
        </authorList>
    </citation>
    <scope>NUCLEOTIDE SEQUENCE [LARGE SCALE GENOMIC DNA]</scope>
    <source>
        <strain>ATCC 33323 / DSM 20243 / BCRC 14619 / CIP 102991 / JCM 1131 / KCTC 3163 / NCIMB 11718 / NCTC 13722 / AM63</strain>
    </source>
</reference>
<gene>
    <name evidence="1" type="primary">lgt</name>
    <name type="ordered locus">LGAS_1327</name>
</gene>
<keyword id="KW-1003">Cell membrane</keyword>
<keyword id="KW-0472">Membrane</keyword>
<keyword id="KW-0808">Transferase</keyword>
<keyword id="KW-0812">Transmembrane</keyword>
<keyword id="KW-1133">Transmembrane helix</keyword>
<comment type="function">
    <text evidence="1">Catalyzes the transfer of the diacylglyceryl group from phosphatidylglycerol to the sulfhydryl group of the N-terminal cysteine of a prolipoprotein, the first step in the formation of mature lipoproteins.</text>
</comment>
<comment type="catalytic activity">
    <reaction evidence="1">
        <text>L-cysteinyl-[prolipoprotein] + a 1,2-diacyl-sn-glycero-3-phospho-(1'-sn-glycerol) = an S-1,2-diacyl-sn-glyceryl-L-cysteinyl-[prolipoprotein] + sn-glycerol 1-phosphate + H(+)</text>
        <dbReference type="Rhea" id="RHEA:56712"/>
        <dbReference type="Rhea" id="RHEA-COMP:14679"/>
        <dbReference type="Rhea" id="RHEA-COMP:14680"/>
        <dbReference type="ChEBI" id="CHEBI:15378"/>
        <dbReference type="ChEBI" id="CHEBI:29950"/>
        <dbReference type="ChEBI" id="CHEBI:57685"/>
        <dbReference type="ChEBI" id="CHEBI:64716"/>
        <dbReference type="ChEBI" id="CHEBI:140658"/>
        <dbReference type="EC" id="2.5.1.145"/>
    </reaction>
</comment>
<comment type="pathway">
    <text evidence="1">Protein modification; lipoprotein biosynthesis (diacylglyceryl transfer).</text>
</comment>
<comment type="subcellular location">
    <subcellularLocation>
        <location evidence="1">Cell membrane</location>
        <topology evidence="1">Multi-pass membrane protein</topology>
    </subcellularLocation>
</comment>
<comment type="similarity">
    <text evidence="1">Belongs to the Lgt family.</text>
</comment>
<dbReference type="EC" id="2.5.1.145" evidence="1"/>
<dbReference type="EMBL" id="CP000413">
    <property type="protein sequence ID" value="ABJ60689.1"/>
    <property type="molecule type" value="Genomic_DNA"/>
</dbReference>
<dbReference type="RefSeq" id="WP_003646996.1">
    <property type="nucleotide sequence ID" value="NZ_WBMG01000003.1"/>
</dbReference>
<dbReference type="SMR" id="Q042D3"/>
<dbReference type="GeneID" id="29639265"/>
<dbReference type="KEGG" id="lga:LGAS_1327"/>
<dbReference type="HOGENOM" id="CLU_013386_0_1_9"/>
<dbReference type="BioCyc" id="LGAS324831:G1G6Y-1321-MONOMER"/>
<dbReference type="UniPathway" id="UPA00664"/>
<dbReference type="Proteomes" id="UP000000664">
    <property type="component" value="Chromosome"/>
</dbReference>
<dbReference type="GO" id="GO:0005886">
    <property type="term" value="C:plasma membrane"/>
    <property type="evidence" value="ECO:0007669"/>
    <property type="project" value="UniProtKB-SubCell"/>
</dbReference>
<dbReference type="GO" id="GO:0008961">
    <property type="term" value="F:phosphatidylglycerol-prolipoprotein diacylglyceryl transferase activity"/>
    <property type="evidence" value="ECO:0007669"/>
    <property type="project" value="UniProtKB-UniRule"/>
</dbReference>
<dbReference type="GO" id="GO:0042158">
    <property type="term" value="P:lipoprotein biosynthetic process"/>
    <property type="evidence" value="ECO:0007669"/>
    <property type="project" value="UniProtKB-UniRule"/>
</dbReference>
<dbReference type="HAMAP" id="MF_01147">
    <property type="entry name" value="Lgt"/>
    <property type="match status" value="1"/>
</dbReference>
<dbReference type="InterPro" id="IPR001640">
    <property type="entry name" value="Lgt"/>
</dbReference>
<dbReference type="NCBIfam" id="TIGR00544">
    <property type="entry name" value="lgt"/>
    <property type="match status" value="1"/>
</dbReference>
<dbReference type="PANTHER" id="PTHR30589:SF0">
    <property type="entry name" value="PHOSPHATIDYLGLYCEROL--PROLIPOPROTEIN DIACYLGLYCERYL TRANSFERASE"/>
    <property type="match status" value="1"/>
</dbReference>
<dbReference type="PANTHER" id="PTHR30589">
    <property type="entry name" value="PROLIPOPROTEIN DIACYLGLYCERYL TRANSFERASE"/>
    <property type="match status" value="1"/>
</dbReference>
<dbReference type="Pfam" id="PF01790">
    <property type="entry name" value="LGT"/>
    <property type="match status" value="1"/>
</dbReference>
<name>LGT_LACGA</name>
<evidence type="ECO:0000255" key="1">
    <source>
        <dbReference type="HAMAP-Rule" id="MF_01147"/>
    </source>
</evidence>